<evidence type="ECO:0000255" key="1">
    <source>
        <dbReference type="HAMAP-Rule" id="MF_00235"/>
    </source>
</evidence>
<sequence length="218" mass="23858">MRLILLGAPGAGKGTQAKFIMEAYGVPQISTGDMLRAAVKAGSPLGLKVKDIMTSGGLVSDDIIIDLVKERIAEPDCQKGFLFDGFPRTIPQAEALVAAGVNIDHVLEIFVEDEEIVSRLSGRRVHEASGRVYHVKHNAPKTEGVDDETGEPLVQRDDDKEETVRKRLAVYHEQTEPLVDFYKKLSAESSDSLPVYSRVDGIGSLDDIQARVFEALKK</sequence>
<organism>
    <name type="scientific">Saccharophagus degradans (strain 2-40 / ATCC 43961 / DSM 17024)</name>
    <dbReference type="NCBI Taxonomy" id="203122"/>
    <lineage>
        <taxon>Bacteria</taxon>
        <taxon>Pseudomonadati</taxon>
        <taxon>Pseudomonadota</taxon>
        <taxon>Gammaproteobacteria</taxon>
        <taxon>Cellvibrionales</taxon>
        <taxon>Cellvibrionaceae</taxon>
        <taxon>Saccharophagus</taxon>
    </lineage>
</organism>
<comment type="function">
    <text evidence="1">Catalyzes the reversible transfer of the terminal phosphate group between ATP and AMP. Plays an important role in cellular energy homeostasis and in adenine nucleotide metabolism.</text>
</comment>
<comment type="catalytic activity">
    <reaction evidence="1">
        <text>AMP + ATP = 2 ADP</text>
        <dbReference type="Rhea" id="RHEA:12973"/>
        <dbReference type="ChEBI" id="CHEBI:30616"/>
        <dbReference type="ChEBI" id="CHEBI:456215"/>
        <dbReference type="ChEBI" id="CHEBI:456216"/>
        <dbReference type="EC" id="2.7.4.3"/>
    </reaction>
</comment>
<comment type="pathway">
    <text evidence="1">Purine metabolism; AMP biosynthesis via salvage pathway; AMP from ADP: step 1/1.</text>
</comment>
<comment type="subunit">
    <text evidence="1">Monomer.</text>
</comment>
<comment type="subcellular location">
    <subcellularLocation>
        <location evidence="1">Cytoplasm</location>
    </subcellularLocation>
</comment>
<comment type="domain">
    <text evidence="1">Consists of three domains, a large central CORE domain and two small peripheral domains, NMPbind and LID, which undergo movements during catalysis. The LID domain closes over the site of phosphoryl transfer upon ATP binding. Assembling and dissambling the active center during each catalytic cycle provides an effective means to prevent ATP hydrolysis.</text>
</comment>
<comment type="similarity">
    <text evidence="1">Belongs to the adenylate kinase family.</text>
</comment>
<keyword id="KW-0067">ATP-binding</keyword>
<keyword id="KW-0963">Cytoplasm</keyword>
<keyword id="KW-0418">Kinase</keyword>
<keyword id="KW-0545">Nucleotide biosynthesis</keyword>
<keyword id="KW-0547">Nucleotide-binding</keyword>
<keyword id="KW-1185">Reference proteome</keyword>
<keyword id="KW-0808">Transferase</keyword>
<name>KAD_SACD2</name>
<dbReference type="EC" id="2.7.4.3" evidence="1"/>
<dbReference type="EMBL" id="CP000282">
    <property type="protein sequence ID" value="ABD81495.1"/>
    <property type="molecule type" value="Genomic_DNA"/>
</dbReference>
<dbReference type="RefSeq" id="WP_011468713.1">
    <property type="nucleotide sequence ID" value="NC_007912.1"/>
</dbReference>
<dbReference type="SMR" id="Q21II4"/>
<dbReference type="STRING" id="203122.Sde_2235"/>
<dbReference type="GeneID" id="98613904"/>
<dbReference type="KEGG" id="sde:Sde_2235"/>
<dbReference type="eggNOG" id="COG0563">
    <property type="taxonomic scope" value="Bacteria"/>
</dbReference>
<dbReference type="HOGENOM" id="CLU_032354_1_2_6"/>
<dbReference type="OrthoDB" id="9805030at2"/>
<dbReference type="UniPathway" id="UPA00588">
    <property type="reaction ID" value="UER00649"/>
</dbReference>
<dbReference type="Proteomes" id="UP000001947">
    <property type="component" value="Chromosome"/>
</dbReference>
<dbReference type="GO" id="GO:0005737">
    <property type="term" value="C:cytoplasm"/>
    <property type="evidence" value="ECO:0007669"/>
    <property type="project" value="UniProtKB-SubCell"/>
</dbReference>
<dbReference type="GO" id="GO:0004017">
    <property type="term" value="F:adenylate kinase activity"/>
    <property type="evidence" value="ECO:0007669"/>
    <property type="project" value="UniProtKB-UniRule"/>
</dbReference>
<dbReference type="GO" id="GO:0005524">
    <property type="term" value="F:ATP binding"/>
    <property type="evidence" value="ECO:0007669"/>
    <property type="project" value="UniProtKB-UniRule"/>
</dbReference>
<dbReference type="GO" id="GO:0044209">
    <property type="term" value="P:AMP salvage"/>
    <property type="evidence" value="ECO:0007669"/>
    <property type="project" value="UniProtKB-UniRule"/>
</dbReference>
<dbReference type="CDD" id="cd01428">
    <property type="entry name" value="ADK"/>
    <property type="match status" value="1"/>
</dbReference>
<dbReference type="FunFam" id="3.40.50.300:FF:000106">
    <property type="entry name" value="Adenylate kinase mitochondrial"/>
    <property type="match status" value="1"/>
</dbReference>
<dbReference type="Gene3D" id="3.40.50.300">
    <property type="entry name" value="P-loop containing nucleotide triphosphate hydrolases"/>
    <property type="match status" value="1"/>
</dbReference>
<dbReference type="HAMAP" id="MF_00235">
    <property type="entry name" value="Adenylate_kinase_Adk"/>
    <property type="match status" value="1"/>
</dbReference>
<dbReference type="InterPro" id="IPR006259">
    <property type="entry name" value="Adenyl_kin_sub"/>
</dbReference>
<dbReference type="InterPro" id="IPR000850">
    <property type="entry name" value="Adenylat/UMP-CMP_kin"/>
</dbReference>
<dbReference type="InterPro" id="IPR033690">
    <property type="entry name" value="Adenylat_kinase_CS"/>
</dbReference>
<dbReference type="InterPro" id="IPR007862">
    <property type="entry name" value="Adenylate_kinase_lid-dom"/>
</dbReference>
<dbReference type="InterPro" id="IPR027417">
    <property type="entry name" value="P-loop_NTPase"/>
</dbReference>
<dbReference type="NCBIfam" id="TIGR01351">
    <property type="entry name" value="adk"/>
    <property type="match status" value="1"/>
</dbReference>
<dbReference type="NCBIfam" id="NF001379">
    <property type="entry name" value="PRK00279.1-1"/>
    <property type="match status" value="1"/>
</dbReference>
<dbReference type="NCBIfam" id="NF001380">
    <property type="entry name" value="PRK00279.1-2"/>
    <property type="match status" value="1"/>
</dbReference>
<dbReference type="NCBIfam" id="NF001381">
    <property type="entry name" value="PRK00279.1-3"/>
    <property type="match status" value="1"/>
</dbReference>
<dbReference type="NCBIfam" id="NF011100">
    <property type="entry name" value="PRK14527.1"/>
    <property type="match status" value="1"/>
</dbReference>
<dbReference type="PANTHER" id="PTHR23359">
    <property type="entry name" value="NUCLEOTIDE KINASE"/>
    <property type="match status" value="1"/>
</dbReference>
<dbReference type="Pfam" id="PF00406">
    <property type="entry name" value="ADK"/>
    <property type="match status" value="1"/>
</dbReference>
<dbReference type="Pfam" id="PF05191">
    <property type="entry name" value="ADK_lid"/>
    <property type="match status" value="1"/>
</dbReference>
<dbReference type="PRINTS" id="PR00094">
    <property type="entry name" value="ADENYLTKNASE"/>
</dbReference>
<dbReference type="SUPFAM" id="SSF52540">
    <property type="entry name" value="P-loop containing nucleoside triphosphate hydrolases"/>
    <property type="match status" value="1"/>
</dbReference>
<dbReference type="PROSITE" id="PS00113">
    <property type="entry name" value="ADENYLATE_KINASE"/>
    <property type="match status" value="1"/>
</dbReference>
<feature type="chain" id="PRO_1000021768" description="Adenylate kinase">
    <location>
        <begin position="1"/>
        <end position="218"/>
    </location>
</feature>
<feature type="region of interest" description="NMP" evidence="1">
    <location>
        <begin position="30"/>
        <end position="59"/>
    </location>
</feature>
<feature type="region of interest" description="LID" evidence="1">
    <location>
        <begin position="122"/>
        <end position="159"/>
    </location>
</feature>
<feature type="binding site" evidence="1">
    <location>
        <begin position="10"/>
        <end position="15"/>
    </location>
    <ligand>
        <name>ATP</name>
        <dbReference type="ChEBI" id="CHEBI:30616"/>
    </ligand>
</feature>
<feature type="binding site" evidence="1">
    <location>
        <position position="31"/>
    </location>
    <ligand>
        <name>AMP</name>
        <dbReference type="ChEBI" id="CHEBI:456215"/>
    </ligand>
</feature>
<feature type="binding site" evidence="1">
    <location>
        <position position="36"/>
    </location>
    <ligand>
        <name>AMP</name>
        <dbReference type="ChEBI" id="CHEBI:456215"/>
    </ligand>
</feature>
<feature type="binding site" evidence="1">
    <location>
        <begin position="57"/>
        <end position="59"/>
    </location>
    <ligand>
        <name>AMP</name>
        <dbReference type="ChEBI" id="CHEBI:456215"/>
    </ligand>
</feature>
<feature type="binding site" evidence="1">
    <location>
        <begin position="85"/>
        <end position="88"/>
    </location>
    <ligand>
        <name>AMP</name>
        <dbReference type="ChEBI" id="CHEBI:456215"/>
    </ligand>
</feature>
<feature type="binding site" evidence="1">
    <location>
        <position position="92"/>
    </location>
    <ligand>
        <name>AMP</name>
        <dbReference type="ChEBI" id="CHEBI:456215"/>
    </ligand>
</feature>
<feature type="binding site" evidence="1">
    <location>
        <position position="123"/>
    </location>
    <ligand>
        <name>ATP</name>
        <dbReference type="ChEBI" id="CHEBI:30616"/>
    </ligand>
</feature>
<feature type="binding site" evidence="1">
    <location>
        <begin position="132"/>
        <end position="133"/>
    </location>
    <ligand>
        <name>ATP</name>
        <dbReference type="ChEBI" id="CHEBI:30616"/>
    </ligand>
</feature>
<feature type="binding site" evidence="1">
    <location>
        <position position="156"/>
    </location>
    <ligand>
        <name>AMP</name>
        <dbReference type="ChEBI" id="CHEBI:456215"/>
    </ligand>
</feature>
<feature type="binding site" evidence="1">
    <location>
        <position position="167"/>
    </location>
    <ligand>
        <name>AMP</name>
        <dbReference type="ChEBI" id="CHEBI:456215"/>
    </ligand>
</feature>
<feature type="binding site" evidence="1">
    <location>
        <position position="203"/>
    </location>
    <ligand>
        <name>ATP</name>
        <dbReference type="ChEBI" id="CHEBI:30616"/>
    </ligand>
</feature>
<gene>
    <name evidence="1" type="primary">adk</name>
    <name type="ordered locus">Sde_2235</name>
</gene>
<proteinExistence type="inferred from homology"/>
<accession>Q21II4</accession>
<reference key="1">
    <citation type="journal article" date="2008" name="PLoS Genet.">
        <title>Complete genome sequence of the complex carbohydrate-degrading marine bacterium, Saccharophagus degradans strain 2-40 T.</title>
        <authorList>
            <person name="Weiner R.M."/>
            <person name="Taylor L.E. II"/>
            <person name="Henrissat B."/>
            <person name="Hauser L."/>
            <person name="Land M."/>
            <person name="Coutinho P.M."/>
            <person name="Rancurel C."/>
            <person name="Saunders E.H."/>
            <person name="Longmire A.G."/>
            <person name="Zhang H."/>
            <person name="Bayer E.A."/>
            <person name="Gilbert H.J."/>
            <person name="Larimer F."/>
            <person name="Zhulin I.B."/>
            <person name="Ekborg N.A."/>
            <person name="Lamed R."/>
            <person name="Richardson P.M."/>
            <person name="Borovok I."/>
            <person name="Hutcheson S."/>
        </authorList>
    </citation>
    <scope>NUCLEOTIDE SEQUENCE [LARGE SCALE GENOMIC DNA]</scope>
    <source>
        <strain>2-40 / ATCC 43961 / DSM 17024</strain>
    </source>
</reference>
<protein>
    <recommendedName>
        <fullName evidence="1">Adenylate kinase</fullName>
        <shortName evidence="1">AK</shortName>
        <ecNumber evidence="1">2.7.4.3</ecNumber>
    </recommendedName>
    <alternativeName>
        <fullName evidence="1">ATP-AMP transphosphorylase</fullName>
    </alternativeName>
    <alternativeName>
        <fullName evidence="1">ATP:AMP phosphotransferase</fullName>
    </alternativeName>
    <alternativeName>
        <fullName evidence="1">Adenylate monophosphate kinase</fullName>
    </alternativeName>
</protein>